<sequence length="637" mass="69944">MVGEPKIVSVWQFPFPIVTGRHLPYCPGNCAAHLNYEIAHQLLFSLSHQPRSRILVNRMIFSSPAWVPSPDQSAPDQVPIGDYVLSNHVLSKNDAPFVDAISGHVYTMAMLRTRVESLARGLAADLNWSPNTGSPEEKVVAIYSLNTVALSGPLLTIMYKIDYFILCWAVHRLNGICMPLHSTCTSAEITSHMITASCTTIFTCSGLMSTCLEAAKELQLPAEKIYTLALPSTYLDNANLEDSPRLKTLEQLADQGSQLPQLEPLRWSAGQGKSQVAFLCSTSGTSGRQKLAMLTHYGIITNLLQMSAFEGFANDTYGQTVAAAIPFSHSYGILIGHVGVLRGESHIVFPRFDMQRMLGSVASYRVNRLYLVPPILAVLGANSFLMEPFDLSSVTSVVTGAAALDRTVAGRLKSLQPSWEFLHAWGLTETCIVVTFTSKHDVWYGSSGSLLPGCQLRLVDAEGKDVENYDQSGEVYYKAPNMFVGYLGDHESTISSFDDDGWMRTGDMGAIQVSPNGVEHLFIRDRIKDMIKVKGMQVIPADVEAAMLTHPAVADVAVIGVPDELAGERAMAFVIRSTSVMSEFSEDDLRDSINDHLEDRLHETHWLGDRLEFVAEIPKSQSGKVLKKILREKAASN</sequence>
<gene>
    <name evidence="7" type="primary">cm3C</name>
    <name type="ORF">CCM_01284</name>
</gene>
<evidence type="ECO:0000250" key="1">
    <source>
        <dbReference type="UniProtKB" id="Q08AH3"/>
    </source>
</evidence>
<evidence type="ECO:0000250" key="2">
    <source>
        <dbReference type="UniProtKB" id="Q42524"/>
    </source>
</evidence>
<evidence type="ECO:0000269" key="3">
    <source>
    </source>
</evidence>
<evidence type="ECO:0000269" key="4">
    <source>
    </source>
</evidence>
<evidence type="ECO:0000269" key="5">
    <source>
    </source>
</evidence>
<evidence type="ECO:0000269" key="6">
    <source>
    </source>
</evidence>
<evidence type="ECO:0000303" key="7">
    <source>
    </source>
</evidence>
<evidence type="ECO:0000305" key="8"/>
<evidence type="ECO:0000305" key="9">
    <source>
    </source>
</evidence>
<name>CM3C_CORMM</name>
<keyword id="KW-0067">ATP-binding</keyword>
<keyword id="KW-0436">Ligase</keyword>
<keyword id="KW-0547">Nucleotide-binding</keyword>
<keyword id="KW-1185">Reference proteome</keyword>
<comment type="function">
    <text evidence="6 9">Acyl-CoA ligase; part of the gene cluster that mediates the biosynthesis of beauveriolides I and III, cyclodepsipeptides acting as inhibitors of the acyl-CoA:cholesterol acyltransferase (PubMed:31926180). The HR-PKS cm3B initiates the biosynthesis of beauveriolides by iteratively catalyzing the formation of the linear polyketide chain (Probable). The ATP-dependent acetyl-CoA ligase cm3D converts the polyketide carboxylic acid to a CoA thioester which id shuttled to the first T domain in the NRPS cm3A by the acetyltransferase cm3C (Probable). Cm3A contains 13 domains and assembles the polyketide chain, L-phenylalanine, L-alanine, and D-leucine (or D-allo-isoleucine) to form beauveriolide I (or beauveriolide III). The production of both beauveriolides I and III suggests the substrate adaptability of cm3B, using different amino acids as substrates (Probable).</text>
</comment>
<comment type="pathway">
    <text evidence="6">Secondary metabolite biosynthesis.</text>
</comment>
<comment type="domain">
    <text evidence="2">Both substrate-binding domains (SBD1 and SBD2) are involved in the substrate recognition, and are sufficient to confer the substrate specificity.</text>
</comment>
<comment type="biotechnology">
    <text evidence="3 4 5">Beauveriolides inhibit selectively the acyl-CoA:cholesterol acyl-transferases (ACATs), leading to blocking the synthesis of cholesteryl esters and decreasing the cholesterol concentration, which suggests that beauveriolides are promising as potential lead compounds for antiatherosclerotic agents (PubMed:14718664, PubMed:19336931). Moreover, this activity correlates with inhibitory activities of beauveriolides in the secretion of amyloid-beta-peptide, which suggests that beauveriolides may be an attractive new candidate for the treatment of Alzheimer's disease (PubMed:19396893).</text>
</comment>
<comment type="similarity">
    <text evidence="8">Belongs to the ATP-dependent AMP-binding enzyme family.</text>
</comment>
<proteinExistence type="evidence at protein level"/>
<feature type="chain" id="PRO_0000449818" description="Acyl-CoA ligase cm3C">
    <location>
        <begin position="1"/>
        <end position="637"/>
    </location>
</feature>
<feature type="region of interest" description="SBD1" evidence="2">
    <location>
        <begin position="353"/>
        <end position="423"/>
    </location>
</feature>
<feature type="region of interest" description="SBD2" evidence="2">
    <location>
        <begin position="424"/>
        <end position="486"/>
    </location>
</feature>
<feature type="binding site" evidence="1">
    <location>
        <begin position="282"/>
        <end position="290"/>
    </location>
    <ligand>
        <name>ATP</name>
        <dbReference type="ChEBI" id="CHEBI:30616"/>
    </ligand>
</feature>
<feature type="binding site" evidence="1">
    <location>
        <begin position="423"/>
        <end position="428"/>
    </location>
    <ligand>
        <name>ATP</name>
        <dbReference type="ChEBI" id="CHEBI:30616"/>
    </ligand>
</feature>
<feature type="binding site" evidence="1">
    <location>
        <position position="507"/>
    </location>
    <ligand>
        <name>ATP</name>
        <dbReference type="ChEBI" id="CHEBI:30616"/>
    </ligand>
</feature>
<feature type="binding site" evidence="1">
    <location>
        <position position="526"/>
    </location>
    <ligand>
        <name>ATP</name>
        <dbReference type="ChEBI" id="CHEBI:30616"/>
    </ligand>
</feature>
<feature type="binding site" evidence="1">
    <location>
        <position position="624"/>
    </location>
    <ligand>
        <name>ATP</name>
        <dbReference type="ChEBI" id="CHEBI:30616"/>
    </ligand>
</feature>
<accession>G3J455</accession>
<organism>
    <name type="scientific">Cordyceps militaris (strain CM01)</name>
    <name type="common">Caterpillar fungus</name>
    <dbReference type="NCBI Taxonomy" id="983644"/>
    <lineage>
        <taxon>Eukaryota</taxon>
        <taxon>Fungi</taxon>
        <taxon>Dikarya</taxon>
        <taxon>Ascomycota</taxon>
        <taxon>Pezizomycotina</taxon>
        <taxon>Sordariomycetes</taxon>
        <taxon>Hypocreomycetidae</taxon>
        <taxon>Hypocreales</taxon>
        <taxon>Cordycipitaceae</taxon>
        <taxon>Cordyceps</taxon>
    </lineage>
</organism>
<reference key="1">
    <citation type="journal article" date="2011" name="Genome Biol.">
        <title>Genome sequence of the insect pathogenic fungus Cordyceps militaris, a valued traditional Chinese medicine.</title>
        <authorList>
            <person name="Zheng P."/>
            <person name="Xia Y."/>
            <person name="Xiao G."/>
            <person name="Xiong C."/>
            <person name="Hu X."/>
            <person name="Zhang S."/>
            <person name="Zheng H."/>
            <person name="Huang Y."/>
            <person name="Zhou Y."/>
            <person name="Wang S."/>
            <person name="Zhao G.-P."/>
            <person name="Liu X."/>
            <person name="St Leger R.J."/>
            <person name="Wang C."/>
        </authorList>
    </citation>
    <scope>NUCLEOTIDE SEQUENCE [LARGE SCALE GENOMIC DNA]</scope>
    <source>
        <strain>CM01</strain>
    </source>
</reference>
<reference key="2">
    <citation type="journal article" date="2004" name="Proc. Natl. Acad. Sci. U.S.A.">
        <title>Antiatherogenic activity of fungal beauveriolides, inhibitors of lipid droplet accumulation in macrophages.</title>
        <authorList>
            <person name="Namatame I."/>
            <person name="Tomoda H."/>
            <person name="Ishibashi S."/>
            <person name="Omura S."/>
        </authorList>
    </citation>
    <scope>BIOTECHNOLOGY</scope>
</reference>
<reference key="3">
    <citation type="journal article" date="2009" name="ChemBioChem">
        <title>The natural products beauveriolide I and III: a new class of beta-amyloid-lowering compounds.</title>
        <authorList>
            <person name="Witter D.P."/>
            <person name="Chen Y."/>
            <person name="Rogel J.K."/>
            <person name="Boldt G.E."/>
            <person name="Wentworth P. Jr."/>
        </authorList>
    </citation>
    <scope>BIOTECHNOLOGY</scope>
</reference>
<reference key="4">
    <citation type="journal article" date="2009" name="Chem. Pharm. Bull.">
        <title>The selectivity of beauveriolide derivatives in inhibition toward the two isozymes of acyl-CoA: cholesterol acyltransferase.</title>
        <authorList>
            <person name="Ohshiro T."/>
            <person name="Matsuda D."/>
            <person name="Nagai K."/>
            <person name="Doi T."/>
            <person name="Sunazuka T."/>
            <person name="Takahashi T."/>
            <person name="Rudel L.L."/>
            <person name="Omura S."/>
            <person name="Tomoda H."/>
        </authorList>
    </citation>
    <scope>BIOTECHNOLOGY</scope>
</reference>
<reference key="5">
    <citation type="journal article" date="2020" name="J. Biotechnol.">
        <title>Genome mining and biosynthesis of the Acyl-CoA:cholesterol acyltransferase inhibitor beauveriolide I and III in Cordyceps militaris.</title>
        <authorList>
            <person name="Wang X."/>
            <person name="Gao Y.L."/>
            <person name="Zhang M.L."/>
            <person name="Zhang H.D."/>
            <person name="Huang J.Z."/>
            <person name="Li L."/>
        </authorList>
    </citation>
    <scope>FUNCTION</scope>
    <scope>PATHWAY</scope>
</reference>
<dbReference type="EC" id="6.2.1.-" evidence="9"/>
<dbReference type="EMBL" id="JH126399">
    <property type="protein sequence ID" value="EGX96626.1"/>
    <property type="molecule type" value="Genomic_DNA"/>
</dbReference>
<dbReference type="RefSeq" id="XP_006666503.1">
    <property type="nucleotide sequence ID" value="XM_006666440.1"/>
</dbReference>
<dbReference type="SMR" id="G3J455"/>
<dbReference type="STRING" id="983644.G3J455"/>
<dbReference type="GeneID" id="18163315"/>
<dbReference type="KEGG" id="cmt:CCM_01284"/>
<dbReference type="VEuPathDB" id="FungiDB:CCM_01284"/>
<dbReference type="eggNOG" id="KOG1176">
    <property type="taxonomic scope" value="Eukaryota"/>
</dbReference>
<dbReference type="HOGENOM" id="CLU_000022_59_2_1"/>
<dbReference type="InParanoid" id="G3J455"/>
<dbReference type="OMA" id="LQWESAK"/>
<dbReference type="OrthoDB" id="6509636at2759"/>
<dbReference type="Proteomes" id="UP000001610">
    <property type="component" value="Unassembled WGS sequence"/>
</dbReference>
<dbReference type="GO" id="GO:0005524">
    <property type="term" value="F:ATP binding"/>
    <property type="evidence" value="ECO:0007669"/>
    <property type="project" value="UniProtKB-KW"/>
</dbReference>
<dbReference type="GO" id="GO:0016405">
    <property type="term" value="F:CoA-ligase activity"/>
    <property type="evidence" value="ECO:0007669"/>
    <property type="project" value="TreeGrafter"/>
</dbReference>
<dbReference type="Gene3D" id="3.30.300.30">
    <property type="match status" value="1"/>
</dbReference>
<dbReference type="Gene3D" id="3.40.50.12780">
    <property type="entry name" value="N-terminal domain of ligase-like"/>
    <property type="match status" value="1"/>
</dbReference>
<dbReference type="InterPro" id="IPR025110">
    <property type="entry name" value="AMP-bd_C"/>
</dbReference>
<dbReference type="InterPro" id="IPR045851">
    <property type="entry name" value="AMP-bd_C_sf"/>
</dbReference>
<dbReference type="InterPro" id="IPR000873">
    <property type="entry name" value="AMP-dep_synth/lig_dom"/>
</dbReference>
<dbReference type="InterPro" id="IPR042099">
    <property type="entry name" value="ANL_N_sf"/>
</dbReference>
<dbReference type="PANTHER" id="PTHR24096:SF422">
    <property type="entry name" value="BCDNA.GH02901"/>
    <property type="match status" value="1"/>
</dbReference>
<dbReference type="PANTHER" id="PTHR24096">
    <property type="entry name" value="LONG-CHAIN-FATTY-ACID--COA LIGASE"/>
    <property type="match status" value="1"/>
</dbReference>
<dbReference type="Pfam" id="PF00501">
    <property type="entry name" value="AMP-binding"/>
    <property type="match status" value="1"/>
</dbReference>
<dbReference type="Pfam" id="PF13193">
    <property type="entry name" value="AMP-binding_C"/>
    <property type="match status" value="1"/>
</dbReference>
<dbReference type="SUPFAM" id="SSF56801">
    <property type="entry name" value="Acetyl-CoA synthetase-like"/>
    <property type="match status" value="1"/>
</dbReference>
<protein>
    <recommendedName>
        <fullName evidence="7">Acyl-CoA ligase cm3C</fullName>
        <ecNumber evidence="9">6.2.1.-</ecNumber>
    </recommendedName>
    <alternativeName>
        <fullName evidence="7">Beauveriolides biosynthesis cluster protein C</fullName>
    </alternativeName>
    <alternativeName>
        <fullName evidence="7">Cyclodepsipeptides cm3 biosynthesis cluster protein C</fullName>
    </alternativeName>
</protein>